<organism>
    <name type="scientific">Escherichia coli (strain K12)</name>
    <dbReference type="NCBI Taxonomy" id="83333"/>
    <lineage>
        <taxon>Bacteria</taxon>
        <taxon>Pseudomonadati</taxon>
        <taxon>Pseudomonadota</taxon>
        <taxon>Gammaproteobacteria</taxon>
        <taxon>Enterobacterales</taxon>
        <taxon>Enterobacteriaceae</taxon>
        <taxon>Escherichia</taxon>
    </lineage>
</organism>
<protein>
    <recommendedName>
        <fullName evidence="6">Pyrroloquinoline quinone transporter</fullName>
        <shortName evidence="6">PQQ transporter</shortName>
    </recommendedName>
    <alternativeName>
        <fullName evidence="5">TonB-dependent receptor PqqU</fullName>
    </alternativeName>
</protein>
<reference key="1">
    <citation type="journal article" date="1997" name="Science">
        <title>The complete genome sequence of Escherichia coli K-12.</title>
        <authorList>
            <person name="Blattner F.R."/>
            <person name="Plunkett G. III"/>
            <person name="Bloch C.A."/>
            <person name="Perna N.T."/>
            <person name="Burland V."/>
            <person name="Riley M."/>
            <person name="Collado-Vides J."/>
            <person name="Glasner J.D."/>
            <person name="Rode C.K."/>
            <person name="Mayhew G.F."/>
            <person name="Gregor J."/>
            <person name="Davis N.W."/>
            <person name="Kirkpatrick H.A."/>
            <person name="Goeden M.A."/>
            <person name="Rose D.J."/>
            <person name="Mau B."/>
            <person name="Shao Y."/>
        </authorList>
    </citation>
    <scope>NUCLEOTIDE SEQUENCE [LARGE SCALE GENOMIC DNA]</scope>
    <source>
        <strain>K12 / MG1655 / ATCC 47076</strain>
    </source>
</reference>
<reference key="2">
    <citation type="journal article" date="2006" name="Mol. Syst. Biol.">
        <title>Highly accurate genome sequences of Escherichia coli K-12 strains MG1655 and W3110.</title>
        <authorList>
            <person name="Hayashi K."/>
            <person name="Morooka N."/>
            <person name="Yamamoto Y."/>
            <person name="Fujita K."/>
            <person name="Isono K."/>
            <person name="Choi S."/>
            <person name="Ohtsubo E."/>
            <person name="Baba T."/>
            <person name="Wanner B.L."/>
            <person name="Mori H."/>
            <person name="Horiuchi T."/>
        </authorList>
    </citation>
    <scope>NUCLEOTIDE SEQUENCE [LARGE SCALE GENOMIC DNA]</scope>
    <source>
        <strain>K12 / W3110 / ATCC 27325 / DSM 5911</strain>
    </source>
</reference>
<reference key="3">
    <citation type="journal article" date="2022" name="Mol. Microbiol.">
        <title>The TonB-dependent uptake of pyrroloquinoline-quinone (PQQ) and secretion of gluconate by Escherichia coli K-12.</title>
        <authorList>
            <person name="Hantke K."/>
            <person name="Friz S."/>
        </authorList>
    </citation>
    <scope>FUNCTION</scope>
    <scope>DISRUPTION PHENOTYPE</scope>
</reference>
<reference evidence="7" key="4">
    <citation type="journal article" date="2020" name="Acta Crystallogr. D Struct. Biol.">
        <title>The crystal structure of the TonB-dependent transporter YncD reveals a positively charged substrate-binding site.</title>
        <authorList>
            <person name="Grinter R."/>
            <person name="Lithgow T."/>
        </authorList>
    </citation>
    <scope>X-RAY CRYSTALLOGRAPHY (2.96 ANGSTROMS)</scope>
    <scope>FUNCTION</scope>
    <scope>SUBCELLULAR LOCATION</scope>
    <scope>DOMAIN</scope>
    <source>
        <strain>K12 / BW25113</strain>
    </source>
</reference>
<evidence type="ECO:0000255" key="1"/>
<evidence type="ECO:0000255" key="2">
    <source>
        <dbReference type="PROSITE-ProRule" id="PRU01360"/>
    </source>
</evidence>
<evidence type="ECO:0000269" key="3">
    <source>
    </source>
</evidence>
<evidence type="ECO:0000269" key="4">
    <source>
    </source>
</evidence>
<evidence type="ECO:0000303" key="5">
    <source>
    </source>
</evidence>
<evidence type="ECO:0000305" key="6"/>
<evidence type="ECO:0007744" key="7">
    <source>
        <dbReference type="PDB" id="6V81"/>
    </source>
</evidence>
<evidence type="ECO:0007829" key="8">
    <source>
        <dbReference type="PDB" id="6V81"/>
    </source>
</evidence>
<evidence type="ECO:0007829" key="9">
    <source>
        <dbReference type="PDB" id="9C4O"/>
    </source>
</evidence>
<gene>
    <name evidence="5" type="primary">pqqU</name>
    <name type="synonym">yncD</name>
    <name type="ordered locus">b1451</name>
    <name type="ordered locus">JW1446</name>
</gene>
<dbReference type="EMBL" id="U00096">
    <property type="protein sequence ID" value="AAC74533.1"/>
    <property type="molecule type" value="Genomic_DNA"/>
</dbReference>
<dbReference type="EMBL" id="AP009048">
    <property type="protein sequence ID" value="BAE76444.1"/>
    <property type="molecule type" value="Genomic_DNA"/>
</dbReference>
<dbReference type="PIR" id="F64897">
    <property type="entry name" value="F64897"/>
</dbReference>
<dbReference type="RefSeq" id="NP_415968.1">
    <property type="nucleotide sequence ID" value="NC_000913.3"/>
</dbReference>
<dbReference type="RefSeq" id="WP_000689363.1">
    <property type="nucleotide sequence ID" value="NZ_LN832404.1"/>
</dbReference>
<dbReference type="PDB" id="6V81">
    <property type="method" value="X-ray"/>
    <property type="resolution" value="2.96 A"/>
    <property type="chains" value="A=1-700"/>
</dbReference>
<dbReference type="PDB" id="9C4O">
    <property type="method" value="EM"/>
    <property type="resolution" value="1.99 A"/>
    <property type="chains" value="A=24-700"/>
</dbReference>
<dbReference type="PDBsum" id="6V81"/>
<dbReference type="PDBsum" id="9C4O"/>
<dbReference type="EMDB" id="EMD-45192"/>
<dbReference type="SMR" id="P76115"/>
<dbReference type="BioGRID" id="4260197">
    <property type="interactions" value="180"/>
</dbReference>
<dbReference type="ComplexPortal" id="CPX-3585">
    <property type="entry name" value="Uncharacterized yncD-DHBS outer membrane transporter complex"/>
</dbReference>
<dbReference type="DIP" id="DIP-12750N"/>
<dbReference type="FunCoup" id="P76115">
    <property type="interactions" value="82"/>
</dbReference>
<dbReference type="IntAct" id="P76115">
    <property type="interactions" value="3"/>
</dbReference>
<dbReference type="STRING" id="511145.b1451"/>
<dbReference type="TCDB" id="1.B.14.9.5">
    <property type="family name" value="the outer membrane receptor (omr) family"/>
</dbReference>
<dbReference type="TCDB" id="1.B.22.1.3">
    <property type="family name" value="the outer bacterial membrane secretin (secretin) family"/>
</dbReference>
<dbReference type="PaxDb" id="511145-b1451"/>
<dbReference type="EnsemblBacteria" id="AAC74533">
    <property type="protein sequence ID" value="AAC74533"/>
    <property type="gene ID" value="b1451"/>
</dbReference>
<dbReference type="GeneID" id="946015"/>
<dbReference type="KEGG" id="ecj:JW1446"/>
<dbReference type="KEGG" id="eco:b1451"/>
<dbReference type="KEGG" id="ecoc:C3026_08440"/>
<dbReference type="PATRIC" id="fig|1411691.4.peg.817"/>
<dbReference type="EchoBASE" id="EB3536"/>
<dbReference type="eggNOG" id="COG4772">
    <property type="taxonomic scope" value="Bacteria"/>
</dbReference>
<dbReference type="HOGENOM" id="CLU_008287_13_0_6"/>
<dbReference type="InParanoid" id="P76115"/>
<dbReference type="OMA" id="DTRWTHR"/>
<dbReference type="OrthoDB" id="9760620at2"/>
<dbReference type="PhylomeDB" id="P76115"/>
<dbReference type="BioCyc" id="EcoCyc:G6762-MONOMER"/>
<dbReference type="PRO" id="PR:P76115"/>
<dbReference type="Proteomes" id="UP000000625">
    <property type="component" value="Chromosome"/>
</dbReference>
<dbReference type="GO" id="GO:0009279">
    <property type="term" value="C:cell outer membrane"/>
    <property type="evidence" value="ECO:0000314"/>
    <property type="project" value="EcoCyc"/>
</dbReference>
<dbReference type="GO" id="GO:0016020">
    <property type="term" value="C:membrane"/>
    <property type="evidence" value="ECO:0000303"/>
    <property type="project" value="ComplexPortal"/>
</dbReference>
<dbReference type="GO" id="GO:1902495">
    <property type="term" value="C:transmembrane transporter complex"/>
    <property type="evidence" value="ECO:0000303"/>
    <property type="project" value="ComplexPortal"/>
</dbReference>
<dbReference type="GO" id="GO:0015344">
    <property type="term" value="F:siderophore uptake transmembrane transporter activity"/>
    <property type="evidence" value="ECO:0000318"/>
    <property type="project" value="GO_Central"/>
</dbReference>
<dbReference type="GO" id="GO:0038023">
    <property type="term" value="F:signaling receptor activity"/>
    <property type="evidence" value="ECO:0007669"/>
    <property type="project" value="InterPro"/>
</dbReference>
<dbReference type="GO" id="GO:0030003">
    <property type="term" value="P:intracellular monoatomic cation homeostasis"/>
    <property type="evidence" value="ECO:0000303"/>
    <property type="project" value="ComplexPortal"/>
</dbReference>
<dbReference type="GO" id="GO:0044718">
    <property type="term" value="P:siderophore transmembrane transport"/>
    <property type="evidence" value="ECO:0000318"/>
    <property type="project" value="GO_Central"/>
</dbReference>
<dbReference type="CDD" id="cd01347">
    <property type="entry name" value="ligand_gated_channel"/>
    <property type="match status" value="1"/>
</dbReference>
<dbReference type="Gene3D" id="2.40.170.20">
    <property type="entry name" value="TonB-dependent receptor, beta-barrel domain"/>
    <property type="match status" value="1"/>
</dbReference>
<dbReference type="Gene3D" id="2.170.130.10">
    <property type="entry name" value="TonB-dependent receptor, plug domain"/>
    <property type="match status" value="1"/>
</dbReference>
<dbReference type="InterPro" id="IPR012910">
    <property type="entry name" value="Plug_dom"/>
</dbReference>
<dbReference type="InterPro" id="IPR037066">
    <property type="entry name" value="Plug_dom_sf"/>
</dbReference>
<dbReference type="InterPro" id="IPR048212">
    <property type="entry name" value="PqqU"/>
</dbReference>
<dbReference type="InterPro" id="IPR039426">
    <property type="entry name" value="TonB-dep_rcpt-like"/>
</dbReference>
<dbReference type="InterPro" id="IPR000531">
    <property type="entry name" value="TonB-dep_rcpt_b-brl"/>
</dbReference>
<dbReference type="InterPro" id="IPR036942">
    <property type="entry name" value="TonB_rcpt_b-brl_sf"/>
</dbReference>
<dbReference type="InterPro" id="IPR010105">
    <property type="entry name" value="TonB_sidphr_rcpt"/>
</dbReference>
<dbReference type="NCBIfam" id="TIGR01783">
    <property type="entry name" value="TonB-siderophor"/>
    <property type="match status" value="1"/>
</dbReference>
<dbReference type="NCBIfam" id="NF041535">
    <property type="entry name" value="TonB_rec_PqqU"/>
    <property type="match status" value="1"/>
</dbReference>
<dbReference type="PANTHER" id="PTHR30069">
    <property type="entry name" value="TONB-DEPENDENT OUTER MEMBRANE RECEPTOR"/>
    <property type="match status" value="1"/>
</dbReference>
<dbReference type="PANTHER" id="PTHR30069:SF28">
    <property type="entry name" value="TONB-DEPENDENT RECEPTOR YNCD-RELATED"/>
    <property type="match status" value="1"/>
</dbReference>
<dbReference type="Pfam" id="PF07715">
    <property type="entry name" value="Plug"/>
    <property type="match status" value="1"/>
</dbReference>
<dbReference type="Pfam" id="PF00593">
    <property type="entry name" value="TonB_dep_Rec_b-barrel"/>
    <property type="match status" value="1"/>
</dbReference>
<dbReference type="SUPFAM" id="SSF56935">
    <property type="entry name" value="Porins"/>
    <property type="match status" value="1"/>
</dbReference>
<dbReference type="PROSITE" id="PS52016">
    <property type="entry name" value="TONB_DEPENDENT_REC_3"/>
    <property type="match status" value="1"/>
</dbReference>
<proteinExistence type="evidence at protein level"/>
<accession>P76115</accession>
<accession>Q2MBB2</accession>
<sequence length="700" mass="77261">MKIFSVRQTVLPALLVLSPVVFAADEQTMIVSAAPQVVSELDTPAAVSVVDGEEMRLATPRINLSESLTGVPGLQVQNRQNYAQDLQLSIRGFGSRSTYGIRGIRLYVDGIPATMPDGQGQTSNIDLSSVQNVEVLRGPFSALYGNASGGVMNVTTQTGQQPPTIEASSYYGSFGSWRYGLKATGATGDGTQPGDVDYTVSTTRFTTHGYRDHSGAQKNLANAKLGVRIDEASKLSLIFNSVDIKADDPGGLTKAEWKANPQQAPRAEQYDTRKTIKQTQAGLRYERSLSSRDDMSVMMYAGERETTQYQSIPMAPQLNPSHAGGVITLQRHYQGIDSRWTHRGELGVPVTFTTGLNYENMSENRKGYNNFRLNSGMPEYGQKGELRRDERNLMWNIDPYLQTQWQLSEKLSLDAGVRYSSVWFDSNDHYVTPGNGDDSGDASYHKWLPAGSLKYAMTDAWNIYLAAGRGFETPTINELSYRADGQSGMNLGLKPSTNDTIEIGSKTRIGDGLLSLALFQTDTDDEIVVDSSSGGRTTYKNAGKTRRQGAELAWDQRFAGDFRVNASWTWLDATYRSNVCNEQDCNGNRMPGIARNMGFASIGYVPEDGWYAGTEARYMGDIMADDENTAKAPSYTLVGLFTGYKYNYHNLTVDLFGRVDNLFDKEYVGSVIVNESNGRYYEPSPGRNYGVGMNIAWRFE</sequence>
<feature type="signal peptide" evidence="1">
    <location>
        <begin position="1"/>
        <end position="23"/>
    </location>
</feature>
<feature type="chain" id="PRO_0000034791" description="Pyrroloquinoline quinone transporter">
    <location>
        <begin position="24"/>
        <end position="700"/>
    </location>
</feature>
<feature type="transmembrane region" description="Beta stranded" evidence="3 7">
    <location>
        <begin position="132"/>
        <end position="136"/>
    </location>
</feature>
<feature type="transmembrane region" description="Beta stranded" evidence="3 7">
    <location>
        <begin position="150"/>
        <end position="160"/>
    </location>
</feature>
<feature type="transmembrane region" description="Beta stranded" evidence="3 7">
    <location>
        <begin position="162"/>
        <end position="171"/>
    </location>
</feature>
<feature type="transmembrane region" description="Beta stranded" evidence="3 7">
    <location>
        <begin position="177"/>
        <end position="186"/>
    </location>
</feature>
<feature type="transmembrane region" description="Beta stranded" evidence="3 7">
    <location>
        <begin position="195"/>
        <end position="204"/>
    </location>
</feature>
<feature type="transmembrane region" description="Beta stranded" evidence="3 7">
    <location>
        <begin position="220"/>
        <end position="227"/>
    </location>
</feature>
<feature type="transmembrane region" description="Beta stranded" evidence="3 7">
    <location>
        <begin position="233"/>
        <end position="241"/>
    </location>
</feature>
<feature type="transmembrane region" description="Beta stranded" evidence="3 7">
    <location>
        <begin position="280"/>
        <end position="288"/>
    </location>
</feature>
<feature type="transmembrane region" description="Beta stranded" evidence="3 7">
    <location>
        <begin position="295"/>
        <end position="301"/>
    </location>
</feature>
<feature type="transmembrane region" description="Beta stranded" evidence="3 7">
    <location>
        <begin position="335"/>
        <end position="344"/>
    </location>
</feature>
<feature type="transmembrane region" description="Beta stranded" evidence="3 7">
    <location>
        <begin position="350"/>
        <end position="358"/>
    </location>
</feature>
<feature type="transmembrane region" description="Beta stranded" evidence="3 7">
    <location>
        <begin position="398"/>
        <end position="405"/>
    </location>
</feature>
<feature type="transmembrane region" description="Beta stranded" evidence="3 7">
    <location>
        <begin position="411"/>
        <end position="419"/>
    </location>
</feature>
<feature type="transmembrane region" description="Beta stranded" evidence="3 7">
    <location>
        <begin position="447"/>
        <end position="456"/>
    </location>
</feature>
<feature type="transmembrane region" description="Beta stranded" evidence="3 7">
    <location>
        <begin position="464"/>
        <end position="468"/>
    </location>
</feature>
<feature type="transmembrane region" description="Beta stranded" evidence="3 7">
    <location>
        <begin position="500"/>
        <end position="509"/>
    </location>
</feature>
<feature type="transmembrane region" description="Beta stranded" evidence="3 7">
    <location>
        <begin position="511"/>
        <end position="520"/>
    </location>
</feature>
<feature type="transmembrane region" description="Beta stranded" evidence="3 7">
    <location>
        <begin position="549"/>
        <end position="556"/>
    </location>
</feature>
<feature type="transmembrane region" description="Beta stranded" evidence="3 7">
    <location>
        <begin position="563"/>
        <end position="570"/>
    </location>
</feature>
<feature type="transmembrane region" description="Beta stranded" evidence="3 7">
    <location>
        <begin position="597"/>
        <end position="604"/>
    </location>
</feature>
<feature type="transmembrane region" description="Beta stranded" evidence="3 7">
    <location>
        <begin position="611"/>
        <end position="617"/>
    </location>
</feature>
<feature type="transmembrane region" description="Beta stranded" evidence="3 7">
    <location>
        <begin position="637"/>
        <end position="647"/>
    </location>
</feature>
<feature type="transmembrane region" description="Beta stranded" evidence="3 7">
    <location>
        <begin position="651"/>
        <end position="659"/>
    </location>
</feature>
<feature type="transmembrane region" description="Beta stranded" evidence="3 7">
    <location>
        <begin position="689"/>
        <end position="697"/>
    </location>
</feature>
<feature type="domain" description="TBDR plug" evidence="2">
    <location>
        <begin position="39"/>
        <end position="157"/>
    </location>
</feature>
<feature type="domain" description="TBDR beta-barrel" evidence="2">
    <location>
        <begin position="162"/>
        <end position="697"/>
    </location>
</feature>
<feature type="short sequence motif" description="TonB C-terminal box">
    <location>
        <begin position="680"/>
        <end position="700"/>
    </location>
</feature>
<feature type="turn" evidence="9">
    <location>
        <begin position="40"/>
        <end position="42"/>
    </location>
</feature>
<feature type="strand" evidence="9">
    <location>
        <begin position="44"/>
        <end position="51"/>
    </location>
</feature>
<feature type="helix" evidence="9">
    <location>
        <begin position="52"/>
        <end position="55"/>
    </location>
</feature>
<feature type="turn" evidence="9">
    <location>
        <begin position="56"/>
        <end position="58"/>
    </location>
</feature>
<feature type="helix" evidence="9">
    <location>
        <begin position="65"/>
        <end position="68"/>
    </location>
</feature>
<feature type="strand" evidence="9">
    <location>
        <begin position="74"/>
        <end position="77"/>
    </location>
</feature>
<feature type="turn" evidence="9">
    <location>
        <begin position="82"/>
        <end position="84"/>
    </location>
</feature>
<feature type="strand" evidence="9">
    <location>
        <begin position="87"/>
        <end position="90"/>
    </location>
</feature>
<feature type="turn" evidence="9">
    <location>
        <begin position="94"/>
        <end position="96"/>
    </location>
</feature>
<feature type="strand" evidence="9">
    <location>
        <begin position="98"/>
        <end position="101"/>
    </location>
</feature>
<feature type="strand" evidence="9">
    <location>
        <begin position="103"/>
        <end position="108"/>
    </location>
</feature>
<feature type="strand" evidence="9">
    <location>
        <begin position="111"/>
        <end position="114"/>
    </location>
</feature>
<feature type="helix" evidence="9">
    <location>
        <begin position="127"/>
        <end position="129"/>
    </location>
</feature>
<feature type="strand" evidence="9">
    <location>
        <begin position="130"/>
        <end position="139"/>
    </location>
</feature>
<feature type="strand" evidence="9">
    <location>
        <begin position="148"/>
        <end position="156"/>
    </location>
</feature>
<feature type="strand" evidence="9">
    <location>
        <begin position="164"/>
        <end position="172"/>
    </location>
</feature>
<feature type="turn" evidence="9">
    <location>
        <begin position="173"/>
        <end position="175"/>
    </location>
</feature>
<feature type="strand" evidence="9">
    <location>
        <begin position="176"/>
        <end position="188"/>
    </location>
</feature>
<feature type="strand" evidence="9">
    <location>
        <begin position="196"/>
        <end position="207"/>
    </location>
</feature>
<feature type="strand" evidence="8">
    <location>
        <begin position="210"/>
        <end position="213"/>
    </location>
</feature>
<feature type="strand" evidence="9">
    <location>
        <begin position="216"/>
        <end position="227"/>
    </location>
</feature>
<feature type="strand" evidence="9">
    <location>
        <begin position="230"/>
        <end position="247"/>
    </location>
</feature>
<feature type="helix" evidence="9">
    <location>
        <begin position="254"/>
        <end position="259"/>
    </location>
</feature>
<feature type="helix" evidence="9">
    <location>
        <begin position="265"/>
        <end position="270"/>
    </location>
</feature>
<feature type="strand" evidence="9">
    <location>
        <begin position="273"/>
        <end position="288"/>
    </location>
</feature>
<feature type="strand" evidence="9">
    <location>
        <begin position="290"/>
        <end position="309"/>
    </location>
</feature>
<feature type="helix" evidence="9">
    <location>
        <begin position="314"/>
        <end position="317"/>
    </location>
</feature>
<feature type="strand" evidence="9">
    <location>
        <begin position="325"/>
        <end position="368"/>
    </location>
</feature>
<feature type="strand" evidence="9">
    <location>
        <begin position="370"/>
        <end position="382"/>
    </location>
</feature>
<feature type="strand" evidence="9">
    <location>
        <begin position="385"/>
        <end position="405"/>
    </location>
</feature>
<feature type="strand" evidence="9">
    <location>
        <begin position="408"/>
        <end position="428"/>
    </location>
</feature>
<feature type="strand" evidence="9">
    <location>
        <begin position="440"/>
        <end position="472"/>
    </location>
</feature>
<feature type="helix" evidence="9">
    <location>
        <begin position="476"/>
        <end position="480"/>
    </location>
</feature>
<feature type="strand" evidence="9">
    <location>
        <begin position="496"/>
        <end position="508"/>
    </location>
</feature>
<feature type="strand" evidence="9">
    <location>
        <begin position="510"/>
        <end position="533"/>
    </location>
</feature>
<feature type="strand" evidence="9">
    <location>
        <begin position="536"/>
        <end position="558"/>
    </location>
</feature>
<feature type="turn" evidence="9">
    <location>
        <begin position="559"/>
        <end position="561"/>
    </location>
</feature>
<feature type="strand" evidence="9">
    <location>
        <begin position="562"/>
        <end position="577"/>
    </location>
</feature>
<feature type="strand" evidence="9">
    <location>
        <begin position="581"/>
        <end position="583"/>
    </location>
</feature>
<feature type="strand" evidence="9">
    <location>
        <begin position="594"/>
        <end position="604"/>
    </location>
</feature>
<feature type="strand" evidence="9">
    <location>
        <begin position="607"/>
        <end position="619"/>
    </location>
</feature>
<feature type="strand" evidence="9">
    <location>
        <begin position="630"/>
        <end position="632"/>
    </location>
</feature>
<feature type="strand" evidence="9">
    <location>
        <begin position="635"/>
        <end position="648"/>
    </location>
</feature>
<feature type="strand" evidence="9">
    <location>
        <begin position="651"/>
        <end position="661"/>
    </location>
</feature>
<feature type="strand" evidence="9">
    <location>
        <begin position="668"/>
        <end position="671"/>
    </location>
</feature>
<feature type="strand" evidence="9">
    <location>
        <begin position="681"/>
        <end position="683"/>
    </location>
</feature>
<feature type="strand" evidence="9">
    <location>
        <begin position="687"/>
        <end position="698"/>
    </location>
</feature>
<keyword id="KW-0002">3D-structure</keyword>
<keyword id="KW-0998">Cell outer membrane</keyword>
<keyword id="KW-0472">Membrane</keyword>
<keyword id="KW-0675">Receptor</keyword>
<keyword id="KW-1185">Reference proteome</keyword>
<keyword id="KW-0732">Signal</keyword>
<keyword id="KW-0798">TonB box</keyword>
<keyword id="KW-0812">Transmembrane</keyword>
<keyword id="KW-1134">Transmembrane beta strand</keyword>
<keyword id="KW-0813">Transport</keyword>
<comment type="function">
    <text evidence="3 4">Mediates the TonB-dependent high affinity transport across the outer membrane of pyrroloquinoline quinone (PQQ), a redox cofactor required for the activity of Gcd and Asd dehydrogenases (PubMed:36054785). The uptake process is energised via the TonB-ExbBD complex (PubMed:36054785). Not involved in the transport of an iron-containing substrate under laboratory conditions (PubMed:32355044, PubMed:36054785).</text>
</comment>
<comment type="subcellular location">
    <subcellularLocation>
        <location evidence="3">Cell outer membrane</location>
        <topology evidence="3">Multi-pass membrane protein</topology>
    </subcellularLocation>
</comment>
<comment type="domain">
    <text evidence="3">Possesses a conserved positively charged substrate-binding pocket.</text>
</comment>
<comment type="disruption phenotype">
    <text evidence="4">The PTS-PqqU-deficient strain displays growth defects at low PQQ concentrations (PubMed:36054785). However, the mutant can grow at high PQQ concentrations, probably due to diffusion of PQQ across porins (PubMed:36054785).</text>
</comment>
<comment type="miscellaneous">
    <text evidence="4">PQQ is a small molecule and it may also pass the outer membrane without PqqU, through porins. However, this diffusion-dependent uptake process is rather inefficient, which may be a disadvantage when only low amounts of PQQ are present.</text>
</comment>
<comment type="similarity">
    <text evidence="2">Belongs to the TonB-dependent receptor family.</text>
</comment>
<name>PQQU_ECOLI</name>